<gene>
    <name type="primary">rat1</name>
    <name type="ORF">AO090012000503</name>
</gene>
<protein>
    <recommendedName>
        <fullName>5'-3' exoribonuclease 2</fullName>
        <ecNumber>3.1.13.-</ecNumber>
    </recommendedName>
</protein>
<evidence type="ECO:0000250" key="1"/>
<evidence type="ECO:0000250" key="2">
    <source>
        <dbReference type="UniProtKB" id="P40848"/>
    </source>
</evidence>
<evidence type="ECO:0000250" key="3">
    <source>
        <dbReference type="UniProtKB" id="Q02792"/>
    </source>
</evidence>
<evidence type="ECO:0000255" key="4"/>
<evidence type="ECO:0000255" key="5">
    <source>
        <dbReference type="PROSITE-ProRule" id="PRU00047"/>
    </source>
</evidence>
<evidence type="ECO:0000256" key="6">
    <source>
        <dbReference type="SAM" id="MobiDB-lite"/>
    </source>
</evidence>
<evidence type="ECO:0000305" key="7"/>
<comment type="function">
    <text evidence="2 3">Possesses 5'-&gt;3' exoribonuclease activity (By similarity). Required for the processing of nuclear mRNA and rRNA precursors. May promote the termination of transcription by RNA polymerase II (By similarity). Essential for vegetative cell growth and chromosome segregation (By similarity).</text>
</comment>
<comment type="subunit">
    <text evidence="2">Interacts with RAI1; the interaction is direct, stabilizes RAT1 protein structure and may stimulate its exoribonuclease activity (By similarity). The interaction also stimulates RAI1 pyrophosphohydrolase activity, probably by recruiting it to mRNA substrates (By similarity).</text>
</comment>
<comment type="subcellular location">
    <subcellularLocation>
        <location evidence="1">Nucleus</location>
    </subcellularLocation>
</comment>
<comment type="similarity">
    <text evidence="7">Belongs to the 5'-3' exonuclease family. XRN2/RAT1 subfamily.</text>
</comment>
<reference key="1">
    <citation type="journal article" date="2005" name="Nature">
        <title>Genome sequencing and analysis of Aspergillus oryzae.</title>
        <authorList>
            <person name="Machida M."/>
            <person name="Asai K."/>
            <person name="Sano M."/>
            <person name="Tanaka T."/>
            <person name="Kumagai T."/>
            <person name="Terai G."/>
            <person name="Kusumoto K."/>
            <person name="Arima T."/>
            <person name="Akita O."/>
            <person name="Kashiwagi Y."/>
            <person name="Abe K."/>
            <person name="Gomi K."/>
            <person name="Horiuchi H."/>
            <person name="Kitamoto K."/>
            <person name="Kobayashi T."/>
            <person name="Takeuchi M."/>
            <person name="Denning D.W."/>
            <person name="Galagan J.E."/>
            <person name="Nierman W.C."/>
            <person name="Yu J."/>
            <person name="Archer D.B."/>
            <person name="Bennett J.W."/>
            <person name="Bhatnagar D."/>
            <person name="Cleveland T.E."/>
            <person name="Fedorova N.D."/>
            <person name="Gotoh O."/>
            <person name="Horikawa H."/>
            <person name="Hosoyama A."/>
            <person name="Ichinomiya M."/>
            <person name="Igarashi R."/>
            <person name="Iwashita K."/>
            <person name="Juvvadi P.R."/>
            <person name="Kato M."/>
            <person name="Kato Y."/>
            <person name="Kin T."/>
            <person name="Kokubun A."/>
            <person name="Maeda H."/>
            <person name="Maeyama N."/>
            <person name="Maruyama J."/>
            <person name="Nagasaki H."/>
            <person name="Nakajima T."/>
            <person name="Oda K."/>
            <person name="Okada K."/>
            <person name="Paulsen I."/>
            <person name="Sakamoto K."/>
            <person name="Sawano T."/>
            <person name="Takahashi M."/>
            <person name="Takase K."/>
            <person name="Terabayashi Y."/>
            <person name="Wortman J.R."/>
            <person name="Yamada O."/>
            <person name="Yamagata Y."/>
            <person name="Anazawa H."/>
            <person name="Hata Y."/>
            <person name="Koide Y."/>
            <person name="Komori T."/>
            <person name="Koyama Y."/>
            <person name="Minetoki T."/>
            <person name="Suharnan S."/>
            <person name="Tanaka A."/>
            <person name="Isono K."/>
            <person name="Kuhara S."/>
            <person name="Ogasawara N."/>
            <person name="Kikuchi H."/>
        </authorList>
    </citation>
    <scope>NUCLEOTIDE SEQUENCE [LARGE SCALE GENOMIC DNA]</scope>
    <source>
        <strain>ATCC 42149 / RIB 40</strain>
    </source>
</reference>
<accession>Q2UCP5</accession>
<feature type="initiator methionine" description="Removed" evidence="1">
    <location>
        <position position="1"/>
    </location>
</feature>
<feature type="chain" id="PRO_0000249919" description="5'-3' exoribonuclease 2">
    <location>
        <begin position="2"/>
        <end position="1035"/>
    </location>
</feature>
<feature type="zinc finger region" description="CCHC-type" evidence="5">
    <location>
        <begin position="266"/>
        <end position="283"/>
    </location>
</feature>
<feature type="region of interest" description="Disordered" evidence="6">
    <location>
        <begin position="417"/>
        <end position="470"/>
    </location>
</feature>
<feature type="region of interest" description="Disordered" evidence="6">
    <location>
        <begin position="515"/>
        <end position="583"/>
    </location>
</feature>
<feature type="region of interest" description="Disordered" evidence="6">
    <location>
        <begin position="865"/>
        <end position="1035"/>
    </location>
</feature>
<feature type="coiled-coil region" evidence="4">
    <location>
        <begin position="406"/>
        <end position="434"/>
    </location>
</feature>
<feature type="compositionally biased region" description="Basic and acidic residues" evidence="6">
    <location>
        <begin position="417"/>
        <end position="432"/>
    </location>
</feature>
<feature type="compositionally biased region" description="Polar residues" evidence="6">
    <location>
        <begin position="564"/>
        <end position="573"/>
    </location>
</feature>
<feature type="compositionally biased region" description="Gly residues" evidence="6">
    <location>
        <begin position="880"/>
        <end position="889"/>
    </location>
</feature>
<feature type="compositionally biased region" description="Polar residues" evidence="6">
    <location>
        <begin position="955"/>
        <end position="967"/>
    </location>
</feature>
<feature type="compositionally biased region" description="Low complexity" evidence="6">
    <location>
        <begin position="972"/>
        <end position="996"/>
    </location>
</feature>
<feature type="compositionally biased region" description="Gly residues" evidence="6">
    <location>
        <begin position="997"/>
        <end position="1019"/>
    </location>
</feature>
<keyword id="KW-0175">Coiled coil</keyword>
<keyword id="KW-0269">Exonuclease</keyword>
<keyword id="KW-0378">Hydrolase</keyword>
<keyword id="KW-0479">Metal-binding</keyword>
<keyword id="KW-0507">mRNA processing</keyword>
<keyword id="KW-0540">Nuclease</keyword>
<keyword id="KW-0539">Nucleus</keyword>
<keyword id="KW-1185">Reference proteome</keyword>
<keyword id="KW-0698">rRNA processing</keyword>
<keyword id="KW-0804">Transcription</keyword>
<keyword id="KW-0805">Transcription regulation</keyword>
<keyword id="KW-0806">Transcription termination</keyword>
<keyword id="KW-0862">Zinc</keyword>
<keyword id="KW-0863">Zinc-finger</keyword>
<sequence>MGVPALFRWLSNKYPKIISPVIEEQPYEVNGEQIPVDTTRPNPNGEELDNLYLDMNGIVHPCTHPEGKPPPANEQEMMLEIFNYTDRVVNMVRPRKLLMIAVDGVAPRAKMNQQRARRFRSAQEAKEADEKKEEFRKQFLKKSKGDQEIHEEVIQKTWDSNVITPGTPFMDILAASLRYWIAYKLNTDPAWEKLKIIISDATVPGEGEHKIMEFVRSQRAAPEHDPNTRHVIYGLDADLIMLGLATHEPHFRVLREDVFFQESKARTCHLCGQAGHKAEECRGQAKEKNGQFDEKGKGTSLKPFIWLNVSILREYLAVELYVPHQPFPFDLERALDDWVFMCFFVGNDFLPHLPSLDIRENGIDTLIAIWRDNIPVMGGYLTKDGHVEFKKAQLILQGLAKQEDAIFRRRRQVEEKKLANEKRRKEEAQARDRARKRRRSSPNYEPSEPPASNRARGGGGDSAPPNDVELIIPGRGELSRENRELTHSMVVNRGAVYRANMANKSAAAILKSKLMKGSQEGDDTAESTPMPDADGASDSKIEPTSPSVLGKRKAEEPEGETDTPADNTDSTPKPSKDDEMPPDTVRLWEEGYADRYYEQKFGVDPQDKEFRHKVARAYAEGLAWVLLYYFQGCPSWNWYYPYHYAPFAADFVDIGDMELSFEKGTPFKPFEQLMGVLPASSNHAIPEVFHDLMQDPESEIIDFYPEDFAVDLNGKKFAWQGVILLPFIDEKRLLAAMEKKYPLLSDDERHRNTVGREVLLLSDGHPLYQDLVANFYSKKQGAPKYTLNMRVSEGLAGRVERNETYIPHSSLVSSLEEYGMPTLEDDRSLTVNYEIPKSNHIHKSMLLRGVKFPPPALDNADIQATRSKAQHSGRSFGGAPFRGGHGNRGGRINYASDRPNPFAAHLDPNFMPPSNAGAQGMPSGWAPPVPGSANFSRGPPPPPRGNHRNHYGSGHAQQQGYQQTNYGRNDYYGRGQQGHQHQGSYGNQSGQYSGRQSGYGGAEYRGGGYQRGGYQGQGQGRDYYNSRNQGGYGRY</sequence>
<name>XRN2_ASPOR</name>
<dbReference type="EC" id="3.1.13.-"/>
<dbReference type="EMBL" id="BA000052">
    <property type="protein sequence ID" value="BAE60670.1"/>
    <property type="molecule type" value="Genomic_DNA"/>
</dbReference>
<dbReference type="RefSeq" id="XP_001727509.1">
    <property type="nucleotide sequence ID" value="XM_001727457.2"/>
</dbReference>
<dbReference type="SMR" id="Q2UCP5"/>
<dbReference type="STRING" id="510516.Q2UCP5"/>
<dbReference type="EnsemblFungi" id="BAE60670">
    <property type="protein sequence ID" value="BAE60670"/>
    <property type="gene ID" value="AO090012000503"/>
</dbReference>
<dbReference type="GeneID" id="5987983"/>
<dbReference type="KEGG" id="aor:AO090012000503"/>
<dbReference type="VEuPathDB" id="FungiDB:AO090012000503"/>
<dbReference type="HOGENOM" id="CLU_006038_1_1_1"/>
<dbReference type="OMA" id="ITHDMVV"/>
<dbReference type="OrthoDB" id="81033at5052"/>
<dbReference type="Proteomes" id="UP000006564">
    <property type="component" value="Chromosome 4"/>
</dbReference>
<dbReference type="GO" id="GO:0005634">
    <property type="term" value="C:nucleus"/>
    <property type="evidence" value="ECO:0007669"/>
    <property type="project" value="UniProtKB-SubCell"/>
</dbReference>
<dbReference type="GO" id="GO:0004534">
    <property type="term" value="F:5'-3' RNA exonuclease activity"/>
    <property type="evidence" value="ECO:0007669"/>
    <property type="project" value="EnsemblFungi"/>
</dbReference>
<dbReference type="GO" id="GO:0003723">
    <property type="term" value="F:RNA binding"/>
    <property type="evidence" value="ECO:0007669"/>
    <property type="project" value="TreeGrafter"/>
</dbReference>
<dbReference type="GO" id="GO:0008270">
    <property type="term" value="F:zinc ion binding"/>
    <property type="evidence" value="ECO:0007669"/>
    <property type="project" value="UniProtKB-KW"/>
</dbReference>
<dbReference type="GO" id="GO:0006353">
    <property type="term" value="P:DNA-templated transcription termination"/>
    <property type="evidence" value="ECO:0007669"/>
    <property type="project" value="UniProtKB-KW"/>
</dbReference>
<dbReference type="GO" id="GO:0006397">
    <property type="term" value="P:mRNA processing"/>
    <property type="evidence" value="ECO:0007669"/>
    <property type="project" value="UniProtKB-KW"/>
</dbReference>
<dbReference type="GO" id="GO:0000956">
    <property type="term" value="P:nuclear-transcribed mRNA catabolic process"/>
    <property type="evidence" value="ECO:0007669"/>
    <property type="project" value="EnsemblFungi"/>
</dbReference>
<dbReference type="GO" id="GO:0051984">
    <property type="term" value="P:positive regulation of chromosome segregation"/>
    <property type="evidence" value="ECO:0007669"/>
    <property type="project" value="EnsemblFungi"/>
</dbReference>
<dbReference type="GO" id="GO:0180037">
    <property type="term" value="P:rapid tRNA decay"/>
    <property type="evidence" value="ECO:0007669"/>
    <property type="project" value="EnsemblFungi"/>
</dbReference>
<dbReference type="GO" id="GO:0006364">
    <property type="term" value="P:rRNA processing"/>
    <property type="evidence" value="ECO:0007669"/>
    <property type="project" value="UniProtKB-KW"/>
</dbReference>
<dbReference type="CDD" id="cd18673">
    <property type="entry name" value="PIN_XRN1-2-like"/>
    <property type="match status" value="1"/>
</dbReference>
<dbReference type="FunFam" id="1.25.40.1050:FF:000002">
    <property type="entry name" value="5'-3' exoribonuclease"/>
    <property type="match status" value="1"/>
</dbReference>
<dbReference type="FunFam" id="3.40.50.12390:FF:000003">
    <property type="entry name" value="5'-3' exoribonuclease"/>
    <property type="match status" value="1"/>
</dbReference>
<dbReference type="FunFam" id="3.40.50.12390:FF:000005">
    <property type="entry name" value="5'-3' exoribonuclease 2"/>
    <property type="match status" value="1"/>
</dbReference>
<dbReference type="Gene3D" id="1.25.40.1050">
    <property type="match status" value="1"/>
</dbReference>
<dbReference type="Gene3D" id="3.40.50.12390">
    <property type="match status" value="2"/>
</dbReference>
<dbReference type="InterPro" id="IPR027073">
    <property type="entry name" value="5_3_exoribonuclease"/>
</dbReference>
<dbReference type="InterPro" id="IPR041412">
    <property type="entry name" value="Xrn1_helical"/>
</dbReference>
<dbReference type="InterPro" id="IPR004859">
    <property type="entry name" value="Xrn1_N"/>
</dbReference>
<dbReference type="InterPro" id="IPR017151">
    <property type="entry name" value="Xrn2/3/4"/>
</dbReference>
<dbReference type="InterPro" id="IPR001878">
    <property type="entry name" value="Znf_CCHC"/>
</dbReference>
<dbReference type="PANTHER" id="PTHR12341:SF41">
    <property type="entry name" value="5'-3' EXORIBONUCLEASE 2"/>
    <property type="match status" value="1"/>
</dbReference>
<dbReference type="PANTHER" id="PTHR12341">
    <property type="entry name" value="5'-&gt;3' EXORIBONUCLEASE"/>
    <property type="match status" value="1"/>
</dbReference>
<dbReference type="Pfam" id="PF17846">
    <property type="entry name" value="XRN_M"/>
    <property type="match status" value="1"/>
</dbReference>
<dbReference type="Pfam" id="PF03159">
    <property type="entry name" value="XRN_N"/>
    <property type="match status" value="1"/>
</dbReference>
<dbReference type="PIRSF" id="PIRSF037239">
    <property type="entry name" value="Exonuclease_Xrn2"/>
    <property type="match status" value="1"/>
</dbReference>
<dbReference type="PROSITE" id="PS50158">
    <property type="entry name" value="ZF_CCHC"/>
    <property type="match status" value="1"/>
</dbReference>
<organism>
    <name type="scientific">Aspergillus oryzae (strain ATCC 42149 / RIB 40)</name>
    <name type="common">Yellow koji mold</name>
    <dbReference type="NCBI Taxonomy" id="510516"/>
    <lineage>
        <taxon>Eukaryota</taxon>
        <taxon>Fungi</taxon>
        <taxon>Dikarya</taxon>
        <taxon>Ascomycota</taxon>
        <taxon>Pezizomycotina</taxon>
        <taxon>Eurotiomycetes</taxon>
        <taxon>Eurotiomycetidae</taxon>
        <taxon>Eurotiales</taxon>
        <taxon>Aspergillaceae</taxon>
        <taxon>Aspergillus</taxon>
        <taxon>Aspergillus subgen. Circumdati</taxon>
    </lineage>
</organism>
<proteinExistence type="inferred from homology"/>